<protein>
    <recommendedName>
        <fullName evidence="4">Vasotab-TY2</fullName>
    </recommendedName>
</protein>
<organism>
    <name type="scientific">Tabanus yao</name>
    <name type="common">Horsefly</name>
    <dbReference type="NCBI Taxonomy" id="485572"/>
    <lineage>
        <taxon>Eukaryota</taxon>
        <taxon>Metazoa</taxon>
        <taxon>Ecdysozoa</taxon>
        <taxon>Arthropoda</taxon>
        <taxon>Hexapoda</taxon>
        <taxon>Insecta</taxon>
        <taxon>Pterygota</taxon>
        <taxon>Neoptera</taxon>
        <taxon>Endopterygota</taxon>
        <taxon>Diptera</taxon>
        <taxon>Brachycera</taxon>
        <taxon>Tabanomorpha</taxon>
        <taxon>Tabanoidea</taxon>
        <taxon>Tabanidae</taxon>
        <taxon>Tabanus</taxon>
    </lineage>
</organism>
<evidence type="ECO:0000250" key="1">
    <source>
        <dbReference type="UniProtKB" id="P84843"/>
    </source>
</evidence>
<evidence type="ECO:0000255" key="2">
    <source>
        <dbReference type="PROSITE-ProRule" id="PRU00798"/>
    </source>
</evidence>
<evidence type="ECO:0000269" key="3">
    <source>
    </source>
</evidence>
<evidence type="ECO:0000303" key="4">
    <source>
    </source>
</evidence>
<evidence type="ECO:0000305" key="5"/>
<evidence type="ECO:0000305" key="6">
    <source>
    </source>
</evidence>
<evidence type="ECO:0000312" key="7">
    <source>
        <dbReference type="EMBL" id="ACS72308.1"/>
    </source>
</evidence>
<sequence>MKFALFSVLVLMLIATFVAADDCPRICTADYTPVCGTPSGGRRSANRTFANQCGLDSHNCLNKGATYDKLHDGECK</sequence>
<keyword id="KW-0108">Calcium channel impairing toxin</keyword>
<keyword id="KW-0903">Direct protein sequencing</keyword>
<keyword id="KW-1015">Disulfide bond</keyword>
<keyword id="KW-0872">Ion channel impairing toxin</keyword>
<keyword id="KW-0964">Secreted</keyword>
<keyword id="KW-0732">Signal</keyword>
<keyword id="KW-0800">Toxin</keyword>
<keyword id="KW-0838">Vasoactive</keyword>
<keyword id="KW-0840">Vasodilator</keyword>
<keyword id="KW-1218">Voltage-gated calcium channel impairing toxin</keyword>
<accession>C8YJB3</accession>
<proteinExistence type="evidence at protein level"/>
<feature type="signal peptide" evidence="6">
    <location>
        <begin position="1"/>
        <end position="21"/>
    </location>
</feature>
<feature type="chain" id="PRO_5002994499" description="Vasotab-TY2" evidence="5">
    <location>
        <begin position="22"/>
        <end position="76"/>
    </location>
</feature>
<feature type="domain" description="Kazal-like" evidence="2">
    <location>
        <begin position="22"/>
        <end position="76"/>
    </location>
</feature>
<feature type="disulfide bond" evidence="1 2">
    <location>
        <begin position="23"/>
        <end position="60"/>
    </location>
</feature>
<feature type="disulfide bond" evidence="1 2">
    <location>
        <begin position="27"/>
        <end position="53"/>
    </location>
</feature>
<feature type="disulfide bond" evidence="1 2">
    <location>
        <begin position="35"/>
        <end position="75"/>
    </location>
</feature>
<reference evidence="7" key="1">
    <citation type="journal article" date="2009" name="Mol. Cell. Proteomics">
        <title>Anti-thrombosis repertoire of blood-feeding horsefly salivary glands.</title>
        <authorList>
            <person name="Ma D."/>
            <person name="Wang Y."/>
            <person name="Yang H."/>
            <person name="Wu J."/>
            <person name="An S."/>
            <person name="Gao L."/>
            <person name="Xu X."/>
            <person name="Lai R."/>
        </authorList>
    </citation>
    <scope>NUCLEOTIDE SEQUENCE [MRNA]</scope>
    <scope>PROTEIN SEQUENCE OF 22-41</scope>
    <scope>FUNCTION</scope>
    <scope>SUBCELLULAR LOCATION</scope>
    <scope>TISSUE SPECIFICITY</scope>
    <scope>MASS SPECTROMETRY</scope>
    <source>
        <tissue>Salivary gland</tissue>
    </source>
</reference>
<name>VASO2_TABYA</name>
<comment type="function">
    <text evidence="1 3">Vasodilator protein that inhibits vasoconstriction of isolated rat femoral artery induced by phenylephrine (PubMed:19531497). Since platelet aggregation and vasoconstriction are key hemostatic responses, particularly in small wounds, this protein likely participates in the antihemostatic responses during blood feeding (PubMed:19531497). Blocks L-type calcium channels (Cav1/CACNA1) in left ventricular myocytes isolated from rat hearts (By similarity).</text>
</comment>
<comment type="subcellular location">
    <subcellularLocation>
        <location evidence="3">Secreted</location>
    </subcellularLocation>
</comment>
<comment type="tissue specificity">
    <text evidence="3">Expressed by the salivary gland.</text>
</comment>
<comment type="mass spectrometry"/>
<dbReference type="EMBL" id="FJ469620">
    <property type="protein sequence ID" value="ACS72308.1"/>
    <property type="molecule type" value="mRNA"/>
</dbReference>
<dbReference type="SMR" id="C8YJB3"/>
<dbReference type="GO" id="GO:0005576">
    <property type="term" value="C:extracellular region"/>
    <property type="evidence" value="ECO:0007669"/>
    <property type="project" value="UniProtKB-SubCell"/>
</dbReference>
<dbReference type="GO" id="GO:0005246">
    <property type="term" value="F:calcium channel regulator activity"/>
    <property type="evidence" value="ECO:0007669"/>
    <property type="project" value="UniProtKB-KW"/>
</dbReference>
<dbReference type="GO" id="GO:0090729">
    <property type="term" value="F:toxin activity"/>
    <property type="evidence" value="ECO:0007669"/>
    <property type="project" value="UniProtKB-KW"/>
</dbReference>
<dbReference type="GO" id="GO:0042311">
    <property type="term" value="P:vasodilation"/>
    <property type="evidence" value="ECO:0007669"/>
    <property type="project" value="UniProtKB-KW"/>
</dbReference>
<dbReference type="Gene3D" id="3.30.60.30">
    <property type="match status" value="1"/>
</dbReference>
<dbReference type="InterPro" id="IPR002350">
    <property type="entry name" value="Kazal_dom"/>
</dbReference>
<dbReference type="InterPro" id="IPR036058">
    <property type="entry name" value="Kazal_dom_sf"/>
</dbReference>
<dbReference type="Pfam" id="PF00050">
    <property type="entry name" value="Kazal_1"/>
    <property type="match status" value="1"/>
</dbReference>
<dbReference type="SMART" id="SM00280">
    <property type="entry name" value="KAZAL"/>
    <property type="match status" value="1"/>
</dbReference>
<dbReference type="SUPFAM" id="SSF100895">
    <property type="entry name" value="Kazal-type serine protease inhibitors"/>
    <property type="match status" value="1"/>
</dbReference>
<dbReference type="PROSITE" id="PS51465">
    <property type="entry name" value="KAZAL_2"/>
    <property type="match status" value="1"/>
</dbReference>